<comment type="function">
    <text evidence="1">Participates actively in the response to hyperosmotic and heat shock by preventing the aggregation of stress-denatured proteins and by disaggregating proteins, also in an autonomous, DnaK-independent fashion. Unfolded proteins bind initially to DnaJ; upon interaction with the DnaJ-bound protein, DnaK hydrolyzes its bound ATP, resulting in the formation of a stable complex. GrpE releases ADP from DnaK; ATP binding to DnaK triggers the release of the substrate protein, thus completing the reaction cycle. Several rounds of ATP-dependent interactions between DnaJ, DnaK and GrpE are required for fully efficient folding. Also involved, together with DnaK and GrpE, in the DNA replication of plasmids through activation of initiation proteins.</text>
</comment>
<comment type="cofactor">
    <cofactor evidence="1">
        <name>Zn(2+)</name>
        <dbReference type="ChEBI" id="CHEBI:29105"/>
    </cofactor>
    <text evidence="1">Binds 2 Zn(2+) ions per monomer.</text>
</comment>
<comment type="subunit">
    <text evidence="1">Homodimer.</text>
</comment>
<comment type="subcellular location">
    <subcellularLocation>
        <location evidence="1">Cytoplasm</location>
    </subcellularLocation>
</comment>
<comment type="domain">
    <text evidence="1">The J domain is necessary and sufficient to stimulate DnaK ATPase activity. Zinc center 1 plays an important role in the autonomous, DnaK-independent chaperone activity of DnaJ. Zinc center 2 is essential for interaction with DnaK and for DnaJ activity.</text>
</comment>
<comment type="similarity">
    <text evidence="1">Belongs to the DnaJ family.</text>
</comment>
<protein>
    <recommendedName>
        <fullName evidence="1">Chaperone protein DnaJ</fullName>
    </recommendedName>
</protein>
<name>DNAJ_BACC3</name>
<keyword id="KW-0143">Chaperone</keyword>
<keyword id="KW-0963">Cytoplasm</keyword>
<keyword id="KW-0235">DNA replication</keyword>
<keyword id="KW-0479">Metal-binding</keyword>
<keyword id="KW-0677">Repeat</keyword>
<keyword id="KW-0346">Stress response</keyword>
<keyword id="KW-0862">Zinc</keyword>
<keyword id="KW-0863">Zinc-finger</keyword>
<accession>C1ESK7</accession>
<proteinExistence type="inferred from homology"/>
<gene>
    <name evidence="1" type="primary">dnaJ</name>
    <name type="ordered locus">BCA_4424</name>
</gene>
<reference key="1">
    <citation type="submission" date="2009-02" db="EMBL/GenBank/DDBJ databases">
        <title>Genome sequence of Bacillus cereus 03BB102.</title>
        <authorList>
            <person name="Dodson R.J."/>
            <person name="Jackson P."/>
            <person name="Munk A.C."/>
            <person name="Brettin T."/>
            <person name="Bruce D."/>
            <person name="Detter C."/>
            <person name="Tapia R."/>
            <person name="Han C."/>
            <person name="Sutton G."/>
            <person name="Sims D."/>
        </authorList>
    </citation>
    <scope>NUCLEOTIDE SEQUENCE [LARGE SCALE GENOMIC DNA]</scope>
    <source>
        <strain>03BB102</strain>
    </source>
</reference>
<feature type="chain" id="PRO_1000164240" description="Chaperone protein DnaJ">
    <location>
        <begin position="1"/>
        <end position="371"/>
    </location>
</feature>
<feature type="domain" description="J" evidence="1">
    <location>
        <begin position="5"/>
        <end position="69"/>
    </location>
</feature>
<feature type="repeat" description="CXXCXGXG motif">
    <location>
        <begin position="146"/>
        <end position="153"/>
    </location>
</feature>
<feature type="repeat" description="CXXCXGXG motif">
    <location>
        <begin position="163"/>
        <end position="170"/>
    </location>
</feature>
<feature type="repeat" description="CXXCXGXG motif">
    <location>
        <begin position="189"/>
        <end position="196"/>
    </location>
</feature>
<feature type="repeat" description="CXXCXGXG motif">
    <location>
        <begin position="203"/>
        <end position="210"/>
    </location>
</feature>
<feature type="zinc finger region" description="CR-type" evidence="1">
    <location>
        <begin position="133"/>
        <end position="215"/>
    </location>
</feature>
<feature type="binding site" evidence="1">
    <location>
        <position position="146"/>
    </location>
    <ligand>
        <name>Zn(2+)</name>
        <dbReference type="ChEBI" id="CHEBI:29105"/>
        <label>1</label>
    </ligand>
</feature>
<feature type="binding site" evidence="1">
    <location>
        <position position="149"/>
    </location>
    <ligand>
        <name>Zn(2+)</name>
        <dbReference type="ChEBI" id="CHEBI:29105"/>
        <label>1</label>
    </ligand>
</feature>
<feature type="binding site" evidence="1">
    <location>
        <position position="163"/>
    </location>
    <ligand>
        <name>Zn(2+)</name>
        <dbReference type="ChEBI" id="CHEBI:29105"/>
        <label>2</label>
    </ligand>
</feature>
<feature type="binding site" evidence="1">
    <location>
        <position position="166"/>
    </location>
    <ligand>
        <name>Zn(2+)</name>
        <dbReference type="ChEBI" id="CHEBI:29105"/>
        <label>2</label>
    </ligand>
</feature>
<feature type="binding site" evidence="1">
    <location>
        <position position="189"/>
    </location>
    <ligand>
        <name>Zn(2+)</name>
        <dbReference type="ChEBI" id="CHEBI:29105"/>
        <label>2</label>
    </ligand>
</feature>
<feature type="binding site" evidence="1">
    <location>
        <position position="192"/>
    </location>
    <ligand>
        <name>Zn(2+)</name>
        <dbReference type="ChEBI" id="CHEBI:29105"/>
        <label>2</label>
    </ligand>
</feature>
<feature type="binding site" evidence="1">
    <location>
        <position position="203"/>
    </location>
    <ligand>
        <name>Zn(2+)</name>
        <dbReference type="ChEBI" id="CHEBI:29105"/>
        <label>1</label>
    </ligand>
</feature>
<feature type="binding site" evidence="1">
    <location>
        <position position="206"/>
    </location>
    <ligand>
        <name>Zn(2+)</name>
        <dbReference type="ChEBI" id="CHEBI:29105"/>
        <label>1</label>
    </ligand>
</feature>
<evidence type="ECO:0000255" key="1">
    <source>
        <dbReference type="HAMAP-Rule" id="MF_01152"/>
    </source>
</evidence>
<sequence length="371" mass="40349">MSKRDYYEVLGLSKGASKDEIKKAYRRLAKKYHPDVSKEENAIEKFKEVQEAYEVLSDDQKRAQYDQFGHAGANQGFGGFGGGGDFGGGFGFEDIFSSFFGGGGGRRRDPNAPRQGADLQYQVTLDFEEAIFGKELNVEIPVEDPCDTCKGSGAKPGTSKETCKHCSGSGQVSVEQNTPFGRIVNRQACSHCSGTGQMIKEKCTTCHGSGKVRKRKKINVKIPAGIDNGQQIRVSGKGEAGVNGGPAGDLYVVVHVRSHEFFEREGDHIICEMPLTFAQMALGAEVEVPTVHGKVKLKIPAGTQTGTEFRLKGKGAPNVRGYGQGDQYVVVRVVVPTKLTSHQKDLLREFAGQEEQDDSLFGKLKRAFKGE</sequence>
<dbReference type="EMBL" id="CP001407">
    <property type="protein sequence ID" value="ACO26678.1"/>
    <property type="molecule type" value="Genomic_DNA"/>
</dbReference>
<dbReference type="RefSeq" id="WP_000043937.1">
    <property type="nucleotide sequence ID" value="NZ_CP009318.1"/>
</dbReference>
<dbReference type="SMR" id="C1ESK7"/>
<dbReference type="KEGG" id="bcx:BCA_4424"/>
<dbReference type="PATRIC" id="fig|572264.18.peg.4372"/>
<dbReference type="Proteomes" id="UP000002210">
    <property type="component" value="Chromosome"/>
</dbReference>
<dbReference type="GO" id="GO:0005737">
    <property type="term" value="C:cytoplasm"/>
    <property type="evidence" value="ECO:0007669"/>
    <property type="project" value="UniProtKB-SubCell"/>
</dbReference>
<dbReference type="GO" id="GO:0005524">
    <property type="term" value="F:ATP binding"/>
    <property type="evidence" value="ECO:0007669"/>
    <property type="project" value="InterPro"/>
</dbReference>
<dbReference type="GO" id="GO:0031072">
    <property type="term" value="F:heat shock protein binding"/>
    <property type="evidence" value="ECO:0007669"/>
    <property type="project" value="InterPro"/>
</dbReference>
<dbReference type="GO" id="GO:0051082">
    <property type="term" value="F:unfolded protein binding"/>
    <property type="evidence" value="ECO:0007669"/>
    <property type="project" value="UniProtKB-UniRule"/>
</dbReference>
<dbReference type="GO" id="GO:0008270">
    <property type="term" value="F:zinc ion binding"/>
    <property type="evidence" value="ECO:0007669"/>
    <property type="project" value="UniProtKB-UniRule"/>
</dbReference>
<dbReference type="GO" id="GO:0051085">
    <property type="term" value="P:chaperone cofactor-dependent protein refolding"/>
    <property type="evidence" value="ECO:0007669"/>
    <property type="project" value="TreeGrafter"/>
</dbReference>
<dbReference type="GO" id="GO:0006260">
    <property type="term" value="P:DNA replication"/>
    <property type="evidence" value="ECO:0007669"/>
    <property type="project" value="UniProtKB-KW"/>
</dbReference>
<dbReference type="GO" id="GO:0042026">
    <property type="term" value="P:protein refolding"/>
    <property type="evidence" value="ECO:0007669"/>
    <property type="project" value="TreeGrafter"/>
</dbReference>
<dbReference type="GO" id="GO:0009408">
    <property type="term" value="P:response to heat"/>
    <property type="evidence" value="ECO:0007669"/>
    <property type="project" value="InterPro"/>
</dbReference>
<dbReference type="CDD" id="cd06257">
    <property type="entry name" value="DnaJ"/>
    <property type="match status" value="1"/>
</dbReference>
<dbReference type="CDD" id="cd10747">
    <property type="entry name" value="DnaJ_C"/>
    <property type="match status" value="1"/>
</dbReference>
<dbReference type="CDD" id="cd10719">
    <property type="entry name" value="DnaJ_zf"/>
    <property type="match status" value="1"/>
</dbReference>
<dbReference type="FunFam" id="1.10.287.110:FF:000031">
    <property type="entry name" value="Molecular chaperone DnaJ"/>
    <property type="match status" value="1"/>
</dbReference>
<dbReference type="FunFam" id="2.60.260.20:FF:000004">
    <property type="entry name" value="Molecular chaperone DnaJ"/>
    <property type="match status" value="1"/>
</dbReference>
<dbReference type="FunFam" id="2.60.260.20:FF:000009">
    <property type="entry name" value="Putative Mitochondrial DnaJ chaperone"/>
    <property type="match status" value="1"/>
</dbReference>
<dbReference type="Gene3D" id="6.20.20.10">
    <property type="match status" value="2"/>
</dbReference>
<dbReference type="Gene3D" id="1.10.287.110">
    <property type="entry name" value="DnaJ domain"/>
    <property type="match status" value="1"/>
</dbReference>
<dbReference type="Gene3D" id="2.60.260.20">
    <property type="entry name" value="Urease metallochaperone UreE, N-terminal domain"/>
    <property type="match status" value="2"/>
</dbReference>
<dbReference type="HAMAP" id="MF_01152">
    <property type="entry name" value="DnaJ"/>
    <property type="match status" value="1"/>
</dbReference>
<dbReference type="InterPro" id="IPR012724">
    <property type="entry name" value="DnaJ"/>
</dbReference>
<dbReference type="InterPro" id="IPR002939">
    <property type="entry name" value="DnaJ_C"/>
</dbReference>
<dbReference type="InterPro" id="IPR001623">
    <property type="entry name" value="DnaJ_domain"/>
</dbReference>
<dbReference type="InterPro" id="IPR018253">
    <property type="entry name" value="DnaJ_domain_CS"/>
</dbReference>
<dbReference type="InterPro" id="IPR008971">
    <property type="entry name" value="HSP40/DnaJ_pept-bd"/>
</dbReference>
<dbReference type="InterPro" id="IPR001305">
    <property type="entry name" value="HSP_DnaJ_Cys-rich_dom"/>
</dbReference>
<dbReference type="InterPro" id="IPR036410">
    <property type="entry name" value="HSP_DnaJ_Cys-rich_dom_sf"/>
</dbReference>
<dbReference type="InterPro" id="IPR036869">
    <property type="entry name" value="J_dom_sf"/>
</dbReference>
<dbReference type="NCBIfam" id="TIGR02349">
    <property type="entry name" value="DnaJ_bact"/>
    <property type="match status" value="1"/>
</dbReference>
<dbReference type="NCBIfam" id="NF008035">
    <property type="entry name" value="PRK10767.1"/>
    <property type="match status" value="1"/>
</dbReference>
<dbReference type="NCBIfam" id="NF010873">
    <property type="entry name" value="PRK14280.1"/>
    <property type="match status" value="1"/>
</dbReference>
<dbReference type="PANTHER" id="PTHR43096:SF48">
    <property type="entry name" value="CHAPERONE PROTEIN DNAJ"/>
    <property type="match status" value="1"/>
</dbReference>
<dbReference type="PANTHER" id="PTHR43096">
    <property type="entry name" value="DNAJ HOMOLOG 1, MITOCHONDRIAL-RELATED"/>
    <property type="match status" value="1"/>
</dbReference>
<dbReference type="Pfam" id="PF00226">
    <property type="entry name" value="DnaJ"/>
    <property type="match status" value="1"/>
</dbReference>
<dbReference type="Pfam" id="PF01556">
    <property type="entry name" value="DnaJ_C"/>
    <property type="match status" value="1"/>
</dbReference>
<dbReference type="Pfam" id="PF00684">
    <property type="entry name" value="DnaJ_CXXCXGXG"/>
    <property type="match status" value="1"/>
</dbReference>
<dbReference type="PRINTS" id="PR00625">
    <property type="entry name" value="JDOMAIN"/>
</dbReference>
<dbReference type="SMART" id="SM00271">
    <property type="entry name" value="DnaJ"/>
    <property type="match status" value="1"/>
</dbReference>
<dbReference type="SUPFAM" id="SSF46565">
    <property type="entry name" value="Chaperone J-domain"/>
    <property type="match status" value="1"/>
</dbReference>
<dbReference type="SUPFAM" id="SSF57938">
    <property type="entry name" value="DnaJ/Hsp40 cysteine-rich domain"/>
    <property type="match status" value="1"/>
</dbReference>
<dbReference type="SUPFAM" id="SSF49493">
    <property type="entry name" value="HSP40/DnaJ peptide-binding domain"/>
    <property type="match status" value="2"/>
</dbReference>
<dbReference type="PROSITE" id="PS00636">
    <property type="entry name" value="DNAJ_1"/>
    <property type="match status" value="1"/>
</dbReference>
<dbReference type="PROSITE" id="PS50076">
    <property type="entry name" value="DNAJ_2"/>
    <property type="match status" value="1"/>
</dbReference>
<dbReference type="PROSITE" id="PS51188">
    <property type="entry name" value="ZF_CR"/>
    <property type="match status" value="1"/>
</dbReference>
<organism>
    <name type="scientific">Bacillus cereus (strain 03BB102)</name>
    <dbReference type="NCBI Taxonomy" id="572264"/>
    <lineage>
        <taxon>Bacteria</taxon>
        <taxon>Bacillati</taxon>
        <taxon>Bacillota</taxon>
        <taxon>Bacilli</taxon>
        <taxon>Bacillales</taxon>
        <taxon>Bacillaceae</taxon>
        <taxon>Bacillus</taxon>
        <taxon>Bacillus cereus group</taxon>
    </lineage>
</organism>